<protein>
    <recommendedName>
        <fullName>Ig kappa chain V-VI region XRPC 24</fullName>
    </recommendedName>
</protein>
<comment type="miscellaneous">
    <text>This chain was isolated from a myeloma protein that bind galactan.</text>
</comment>
<keyword id="KW-1064">Adaptive immunity</keyword>
<keyword id="KW-0903">Direct protein sequencing</keyword>
<keyword id="KW-1015">Disulfide bond</keyword>
<keyword id="KW-0391">Immunity</keyword>
<keyword id="KW-1280">Immunoglobulin</keyword>
<keyword id="KW-1185">Reference proteome</keyword>
<feature type="chain" id="PRO_0000059811" description="Ig kappa chain V-VI region XRPC 24">
    <location>
        <begin position="1"/>
        <end position="107" status="greater than"/>
    </location>
</feature>
<feature type="region of interest" description="Framework-1">
    <location>
        <begin position="1"/>
        <end position="23"/>
    </location>
</feature>
<feature type="region of interest" description="Complementarity-determining-1">
    <location>
        <begin position="24"/>
        <end position="33"/>
    </location>
</feature>
<feature type="region of interest" description="Framework-2">
    <location>
        <begin position="34"/>
        <end position="48"/>
    </location>
</feature>
<feature type="region of interest" description="Complementarity-determining-2">
    <location>
        <begin position="49"/>
        <end position="55"/>
    </location>
</feature>
<feature type="region of interest" description="Framework-3">
    <location>
        <begin position="56"/>
        <end position="87"/>
    </location>
</feature>
<feature type="region of interest" description="Complementarity-determining-3">
    <location>
        <begin position="88"/>
        <end position="96"/>
    </location>
</feature>
<feature type="region of interest" description="Framework-4">
    <location>
        <begin position="97"/>
        <end position="106"/>
    </location>
</feature>
<feature type="disulfide bond" evidence="1">
    <location>
        <begin position="23"/>
        <end position="87"/>
    </location>
</feature>
<feature type="non-terminal residue">
    <location>
        <position position="107"/>
    </location>
</feature>
<reference key="1">
    <citation type="journal article" date="1978" name="Biochemistry">
        <title>Kappa chain variable regions from three galactan binding myeloma proteins.</title>
        <authorList>
            <person name="Rao D.N."/>
            <person name="Rudikoff S."/>
            <person name="Potter M."/>
        </authorList>
    </citation>
    <scope>PROTEIN SEQUENCE</scope>
</reference>
<organism>
    <name type="scientific">Mus musculus</name>
    <name type="common">Mouse</name>
    <dbReference type="NCBI Taxonomy" id="10090"/>
    <lineage>
        <taxon>Eukaryota</taxon>
        <taxon>Metazoa</taxon>
        <taxon>Chordata</taxon>
        <taxon>Craniata</taxon>
        <taxon>Vertebrata</taxon>
        <taxon>Euteleostomi</taxon>
        <taxon>Mammalia</taxon>
        <taxon>Eutheria</taxon>
        <taxon>Euarchontoglires</taxon>
        <taxon>Glires</taxon>
        <taxon>Rodentia</taxon>
        <taxon>Myomorpha</taxon>
        <taxon>Muroidea</taxon>
        <taxon>Muridae</taxon>
        <taxon>Murinae</taxon>
        <taxon>Mus</taxon>
        <taxon>Mus</taxon>
    </lineage>
</organism>
<dbReference type="SMR" id="P01676"/>
<dbReference type="FunCoup" id="P01676">
    <property type="interactions" value="580"/>
</dbReference>
<dbReference type="InParanoid" id="P01676"/>
<dbReference type="Proteomes" id="UP000000589">
    <property type="component" value="Unplaced"/>
</dbReference>
<dbReference type="RNAct" id="P01676">
    <property type="molecule type" value="protein"/>
</dbReference>
<dbReference type="GO" id="GO:0019814">
    <property type="term" value="C:immunoglobulin complex"/>
    <property type="evidence" value="ECO:0000318"/>
    <property type="project" value="GO_Central"/>
</dbReference>
<dbReference type="GO" id="GO:0002250">
    <property type="term" value="P:adaptive immune response"/>
    <property type="evidence" value="ECO:0007669"/>
    <property type="project" value="UniProtKB-KW"/>
</dbReference>
<dbReference type="GO" id="GO:0006955">
    <property type="term" value="P:immune response"/>
    <property type="evidence" value="ECO:0000318"/>
    <property type="project" value="GO_Central"/>
</dbReference>
<dbReference type="FunFam" id="2.60.40.10:FF:001317">
    <property type="entry name" value="Immunoglobulin kappa chain variable 4-54"/>
    <property type="match status" value="1"/>
</dbReference>
<dbReference type="Gene3D" id="2.60.40.10">
    <property type="entry name" value="Immunoglobulins"/>
    <property type="match status" value="1"/>
</dbReference>
<dbReference type="InterPro" id="IPR007110">
    <property type="entry name" value="Ig-like_dom"/>
</dbReference>
<dbReference type="InterPro" id="IPR036179">
    <property type="entry name" value="Ig-like_dom_sf"/>
</dbReference>
<dbReference type="InterPro" id="IPR013783">
    <property type="entry name" value="Ig-like_fold"/>
</dbReference>
<dbReference type="InterPro" id="IPR003599">
    <property type="entry name" value="Ig_sub"/>
</dbReference>
<dbReference type="InterPro" id="IPR013106">
    <property type="entry name" value="Ig_V-set"/>
</dbReference>
<dbReference type="InterPro" id="IPR050150">
    <property type="entry name" value="IgV_Light_Chain"/>
</dbReference>
<dbReference type="PANTHER" id="PTHR23267">
    <property type="entry name" value="IMMUNOGLOBULIN LIGHT CHAIN"/>
    <property type="match status" value="1"/>
</dbReference>
<dbReference type="Pfam" id="PF07686">
    <property type="entry name" value="V-set"/>
    <property type="match status" value="1"/>
</dbReference>
<dbReference type="SMART" id="SM00409">
    <property type="entry name" value="IG"/>
    <property type="match status" value="1"/>
</dbReference>
<dbReference type="SMART" id="SM00406">
    <property type="entry name" value="IGv"/>
    <property type="match status" value="1"/>
</dbReference>
<dbReference type="SUPFAM" id="SSF48726">
    <property type="entry name" value="Immunoglobulin"/>
    <property type="match status" value="1"/>
</dbReference>
<dbReference type="PROSITE" id="PS50835">
    <property type="entry name" value="IG_LIKE"/>
    <property type="match status" value="1"/>
</dbReference>
<sequence>EIVLTQSPAITAASLGQKVTITCSASSSVSYMHWYQQKSGTSPKPWIYEISKLASGVPARFSGSGSGTSYSLTISSMEAEDAAIYYCQQWNYPLITFGSGTKLEIKR</sequence>
<name>KV6A2_MOUSE</name>
<proteinExistence type="evidence at protein level"/>
<evidence type="ECO:0000255" key="1">
    <source>
        <dbReference type="PROSITE-ProRule" id="PRU00114"/>
    </source>
</evidence>
<accession>P01676</accession>